<name>SOX9_RAT</name>
<keyword id="KW-0007">Acetylation</keyword>
<keyword id="KW-0010">Activator</keyword>
<keyword id="KW-0221">Differentiation</keyword>
<keyword id="KW-0238">DNA-binding</keyword>
<keyword id="KW-1017">Isopeptide bond</keyword>
<keyword id="KW-0539">Nucleus</keyword>
<keyword id="KW-0597">Phosphoprotein</keyword>
<keyword id="KW-1185">Reference proteome</keyword>
<keyword id="KW-0804">Transcription</keyword>
<keyword id="KW-0805">Transcription regulation</keyword>
<keyword id="KW-0832">Ubl conjugation</keyword>
<feature type="chain" id="PRO_0000450217" description="Transcription factor SOX-9">
    <location>
        <begin position="1"/>
        <end position="507"/>
    </location>
</feature>
<feature type="DNA-binding region" description="HMG box" evidence="3">
    <location>
        <begin position="105"/>
        <end position="173"/>
    </location>
</feature>
<feature type="region of interest" description="Disordered" evidence="4">
    <location>
        <begin position="1"/>
        <end position="67"/>
    </location>
</feature>
<feature type="region of interest" description="Dimerization (DIM)" evidence="1">
    <location>
        <begin position="63"/>
        <end position="103"/>
    </location>
</feature>
<feature type="region of interest" description="PQA" evidence="1">
    <location>
        <begin position="63"/>
        <end position="103"/>
    </location>
</feature>
<feature type="region of interest" description="Disordered" evidence="4">
    <location>
        <begin position="160"/>
        <end position="250"/>
    </location>
</feature>
<feature type="region of interest" description="Transactivation domain (TAM)" evidence="1">
    <location>
        <begin position="224"/>
        <end position="307"/>
    </location>
</feature>
<feature type="region of interest" description="Disordered" evidence="4">
    <location>
        <begin position="335"/>
        <end position="429"/>
    </location>
</feature>
<feature type="region of interest" description="Transactivation domain (TAC)" evidence="1">
    <location>
        <begin position="392"/>
        <end position="507"/>
    </location>
</feature>
<feature type="region of interest" description="Disordered" evidence="4">
    <location>
        <begin position="477"/>
        <end position="507"/>
    </location>
</feature>
<feature type="short sequence motif" description="9aaTAD 1" evidence="1">
    <location>
        <begin position="275"/>
        <end position="284"/>
    </location>
</feature>
<feature type="short sequence motif" description="9aaTAD 2" evidence="1">
    <location>
        <begin position="290"/>
        <end position="298"/>
    </location>
</feature>
<feature type="short sequence motif" description="9aaTAD 3" evidence="1">
    <location>
        <begin position="458"/>
        <end position="466"/>
    </location>
</feature>
<feature type="compositionally biased region" description="Low complexity" evidence="4">
    <location>
        <begin position="30"/>
        <end position="41"/>
    </location>
</feature>
<feature type="compositionally biased region" description="Polar residues" evidence="4">
    <location>
        <begin position="42"/>
        <end position="52"/>
    </location>
</feature>
<feature type="compositionally biased region" description="Basic and acidic residues" evidence="4">
    <location>
        <begin position="56"/>
        <end position="67"/>
    </location>
</feature>
<feature type="compositionally biased region" description="Basic and acidic residues" evidence="4">
    <location>
        <begin position="160"/>
        <end position="174"/>
    </location>
</feature>
<feature type="compositionally biased region" description="Pro residues" evidence="4">
    <location>
        <begin position="341"/>
        <end position="369"/>
    </location>
</feature>
<feature type="compositionally biased region" description="Polar residues" evidence="4">
    <location>
        <begin position="378"/>
        <end position="420"/>
    </location>
</feature>
<feature type="compositionally biased region" description="Polar residues" evidence="4">
    <location>
        <begin position="483"/>
        <end position="507"/>
    </location>
</feature>
<feature type="modified residue" description="Phosphoserine" evidence="2">
    <location>
        <position position="64"/>
    </location>
</feature>
<feature type="modified residue" description="Phosphoserine" evidence="2">
    <location>
        <position position="211"/>
    </location>
</feature>
<feature type="cross-link" description="Glycyl lysine isopeptide (Lys-Gly) (interchain with G-Cter in ubiquitin)" evidence="2">
    <location>
        <position position="396"/>
    </location>
</feature>
<gene>
    <name evidence="7" type="primary">Sox9</name>
</gene>
<evidence type="ECO:0000250" key="1">
    <source>
        <dbReference type="UniProtKB" id="P48436"/>
    </source>
</evidence>
<evidence type="ECO:0000250" key="2">
    <source>
        <dbReference type="UniProtKB" id="Q04887"/>
    </source>
</evidence>
<evidence type="ECO:0000255" key="3">
    <source>
        <dbReference type="PROSITE-ProRule" id="PRU00267"/>
    </source>
</evidence>
<evidence type="ECO:0000256" key="4">
    <source>
        <dbReference type="SAM" id="MobiDB-lite"/>
    </source>
</evidence>
<evidence type="ECO:0000269" key="5">
    <source>
    </source>
</evidence>
<evidence type="ECO:0000305" key="6"/>
<evidence type="ECO:0000312" key="7">
    <source>
        <dbReference type="RGD" id="620474"/>
    </source>
</evidence>
<comment type="function">
    <text evidence="2 5">Transcription factor that plays a key role in chondrocytes differentiation and skeletal development (By similarity). Specifically binds the 5'-ACAAAG-3' DNA motif present in enhancers and super-enhancers and promotes expression of genes important for chondrogenesis, including cartilage matrix protein-coding genes COL2A1, COL4A2, COL9A1, COL11A2 and ACAN, SOX5 and SOX6 (PubMed:26150426). Also binds to some promoter regions (By similarity). Plays a central role in successive steps of chondrocyte differentiation (By similarity). Absolutely required for precartilaginous condensation, the first step in chondrogenesis during which skeletal progenitors differentiate into prechondrocytes (By similarity). Together with SOX5 and SOX6, required for overt chondrogenesis when condensed prechondrocytes differentiate into early stage chondrocytes, the second step in chondrogenesis (By similarity). Later, required to direct hypertrophic maturation and block osteoblast differentiation of growth plate chondrocytes: maintains chondrocyte columnar proliferation, delays prehypertrophy and then prevents osteoblastic differentiation of chondrocytes by lowering beta-catenin (CTNNB1) signaling and RUNX2 expression (By similarity). Also required for chondrocyte hypertrophy, both indirectly, by keeping the lineage fate of chondrocytes, and directly, by remaining present in upper hypertrophic cells and transactivating COL10A1 along with MEF2C (By similarity). Low lipid levels are the main nutritional determinant for chondrogenic commitment of skeletal progenitor cells: when lipids levels are low, FOXO (FOXO1 and FOXO3) transcription factors promote expression of SOX9, which induces chondrogenic commitment and suppresses fatty acid oxidation (By similarity). Mechanistically, helps, but is not required, to remove epigenetic signatures of transcriptional repression and deposit active promoter and enhancer marks at chondrocyte-specific genes (By similarity). Acts in cooperation with the Hedgehog pathway-dependent GLI (GLI1 and GLI3) transcription factors (By similarity). In addition to cartilage development, also acts as a regulator of proliferation and differentiation in epithelial stem/progenitor cells: involved in the lung epithelium during branching morphogenesis, by balancing proliferation and differentiation and regulating the extracellular matrix (By similarity). Controls epithelial branching during kidney development (By similarity).</text>
</comment>
<comment type="subunit">
    <text evidence="1 2">Homodimer; homodimerization is required for activity. Interacts (via C-terminus) with ZNF219; forming a complex that binds to the COL2A1 promoter and activates COL2A1 expression (By similarity). Interacts with DDRGK1. Interacts with EP300/p300 (By similarity). Interacts with beta-catenin (CTNNB1); inhibiting CTNNB1 activity by competing with the binding sites of TCF/LEF within CTNNB1 (By similarity).</text>
</comment>
<comment type="subcellular location">
    <subcellularLocation>
        <location evidence="2 3">Nucleus</location>
    </subcellularLocation>
</comment>
<comment type="domain">
    <text evidence="1">The transactivation domains TAM and TAC (for transactivation domain in the middle and at the C-terminus, respectively) are required to contact transcriptional coactivators and basal transcriptional machinery components and thereby induce gene transactivation.</text>
</comment>
<comment type="domain">
    <text evidence="1">The 9aaTAD motif is a transactivation domain present in a large number of yeast and animal transcription factors.</text>
</comment>
<comment type="domain">
    <text evidence="1">The PQA region (for proline, glutamine and alanine-rich) helps stabilize SOX9 and facilitates transactivation. It lacks intrinsic transactivation capability.</text>
</comment>
<comment type="PTM">
    <text evidence="2">Acetylated; acetylation impairs nuclear localization and ability to transactivate expression of target genes. Deacetylated by SIRT1.</text>
</comment>
<comment type="PTM">
    <text evidence="2">Phosphorylation at Ser-64 and Ser-211 by PKA increases transcriptional activity and may help delay chondrocyte maturation downstream of PTHLH/PTHrP signaling. Phosphorylation at either Ser-64 or Ser-211 is required for sumoylation, but phosphorylation is not dependent on sumoylation. Phosphorylated on tyrosine residues; tyrosine dephosphorylation by PTPN11/SHP2 blocks SOX9 phosphorylation by PKA and subsequent SUMOylation.</text>
</comment>
<comment type="PTM">
    <text evidence="2">Sumoylated; phosphorylation at either Ser-64 or Ser-211 is required for sumoylation. Sumoylation is induced by BMP signaling pathway.</text>
</comment>
<comment type="PTM">
    <text evidence="2">Ubiquitinated; ubiquitination leads to proteasomal degradation and is negatively regulated by DDRGK1.</text>
</comment>
<accession>F1LYL9</accession>
<reference key="1">
    <citation type="journal article" date="2004" name="Nature">
        <title>Genome sequence of the Brown Norway rat yields insights into mammalian evolution.</title>
        <authorList>
            <person name="Gibbs R.A."/>
            <person name="Weinstock G.M."/>
            <person name="Metzker M.L."/>
            <person name="Muzny D.M."/>
            <person name="Sodergren E.J."/>
            <person name="Scherer S."/>
            <person name="Scott G."/>
            <person name="Steffen D."/>
            <person name="Worley K.C."/>
            <person name="Burch P.E."/>
            <person name="Okwuonu G."/>
            <person name="Hines S."/>
            <person name="Lewis L."/>
            <person name="Deramo C."/>
            <person name="Delgado O."/>
            <person name="Dugan-Rocha S."/>
            <person name="Miner G."/>
            <person name="Morgan M."/>
            <person name="Hawes A."/>
            <person name="Gill R."/>
            <person name="Holt R.A."/>
            <person name="Adams M.D."/>
            <person name="Amanatides P.G."/>
            <person name="Baden-Tillson H."/>
            <person name="Barnstead M."/>
            <person name="Chin S."/>
            <person name="Evans C.A."/>
            <person name="Ferriera S."/>
            <person name="Fosler C."/>
            <person name="Glodek A."/>
            <person name="Gu Z."/>
            <person name="Jennings D."/>
            <person name="Kraft C.L."/>
            <person name="Nguyen T."/>
            <person name="Pfannkoch C.M."/>
            <person name="Sitter C."/>
            <person name="Sutton G.G."/>
            <person name="Venter J.C."/>
            <person name="Woodage T."/>
            <person name="Smith D."/>
            <person name="Lee H.-M."/>
            <person name="Gustafson E."/>
            <person name="Cahill P."/>
            <person name="Kana A."/>
            <person name="Doucette-Stamm L."/>
            <person name="Weinstock K."/>
            <person name="Fechtel K."/>
            <person name="Weiss R.B."/>
            <person name="Dunn D.M."/>
            <person name="Green E.D."/>
            <person name="Blakesley R.W."/>
            <person name="Bouffard G.G."/>
            <person name="De Jong P.J."/>
            <person name="Osoegawa K."/>
            <person name="Zhu B."/>
            <person name="Marra M."/>
            <person name="Schein J."/>
            <person name="Bosdet I."/>
            <person name="Fjell C."/>
            <person name="Jones S."/>
            <person name="Krzywinski M."/>
            <person name="Mathewson C."/>
            <person name="Siddiqui A."/>
            <person name="Wye N."/>
            <person name="McPherson J."/>
            <person name="Zhao S."/>
            <person name="Fraser C.M."/>
            <person name="Shetty J."/>
            <person name="Shatsman S."/>
            <person name="Geer K."/>
            <person name="Chen Y."/>
            <person name="Abramzon S."/>
            <person name="Nierman W.C."/>
            <person name="Havlak P.H."/>
            <person name="Chen R."/>
            <person name="Durbin K.J."/>
            <person name="Egan A."/>
            <person name="Ren Y."/>
            <person name="Song X.-Z."/>
            <person name="Li B."/>
            <person name="Liu Y."/>
            <person name="Qin X."/>
            <person name="Cawley S."/>
            <person name="Cooney A.J."/>
            <person name="D'Souza L.M."/>
            <person name="Martin K."/>
            <person name="Wu J.Q."/>
            <person name="Gonzalez-Garay M.L."/>
            <person name="Jackson A.R."/>
            <person name="Kalafus K.J."/>
            <person name="McLeod M.P."/>
            <person name="Milosavljevic A."/>
            <person name="Virk D."/>
            <person name="Volkov A."/>
            <person name="Wheeler D.A."/>
            <person name="Zhang Z."/>
            <person name="Bailey J.A."/>
            <person name="Eichler E.E."/>
            <person name="Tuzun E."/>
            <person name="Birney E."/>
            <person name="Mongin E."/>
            <person name="Ureta-Vidal A."/>
            <person name="Woodwark C."/>
            <person name="Zdobnov E."/>
            <person name="Bork P."/>
            <person name="Suyama M."/>
            <person name="Torrents D."/>
            <person name="Alexandersson M."/>
            <person name="Trask B.J."/>
            <person name="Young J.M."/>
            <person name="Huang H."/>
            <person name="Wang H."/>
            <person name="Xing H."/>
            <person name="Daniels S."/>
            <person name="Gietzen D."/>
            <person name="Schmidt J."/>
            <person name="Stevens K."/>
            <person name="Vitt U."/>
            <person name="Wingrove J."/>
            <person name="Camara F."/>
            <person name="Mar Alba M."/>
            <person name="Abril J.F."/>
            <person name="Guigo R."/>
            <person name="Smit A."/>
            <person name="Dubchak I."/>
            <person name="Rubin E.M."/>
            <person name="Couronne O."/>
            <person name="Poliakov A."/>
            <person name="Huebner N."/>
            <person name="Ganten D."/>
            <person name="Goesele C."/>
            <person name="Hummel O."/>
            <person name="Kreitler T."/>
            <person name="Lee Y.-A."/>
            <person name="Monti J."/>
            <person name="Schulz H."/>
            <person name="Zimdahl H."/>
            <person name="Himmelbauer H."/>
            <person name="Lehrach H."/>
            <person name="Jacob H.J."/>
            <person name="Bromberg S."/>
            <person name="Gullings-Handley J."/>
            <person name="Jensen-Seaman M.I."/>
            <person name="Kwitek A.E."/>
            <person name="Lazar J."/>
            <person name="Pasko D."/>
            <person name="Tonellato P.J."/>
            <person name="Twigger S."/>
            <person name="Ponting C.P."/>
            <person name="Duarte J.M."/>
            <person name="Rice S."/>
            <person name="Goodstadt L."/>
            <person name="Beatson S.A."/>
            <person name="Emes R.D."/>
            <person name="Winter E.E."/>
            <person name="Webber C."/>
            <person name="Brandt P."/>
            <person name="Nyakatura G."/>
            <person name="Adetobi M."/>
            <person name="Chiaromonte F."/>
            <person name="Elnitski L."/>
            <person name="Eswara P."/>
            <person name="Hardison R.C."/>
            <person name="Hou M."/>
            <person name="Kolbe D."/>
            <person name="Makova K."/>
            <person name="Miller W."/>
            <person name="Nekrutenko A."/>
            <person name="Riemer C."/>
            <person name="Schwartz S."/>
            <person name="Taylor J."/>
            <person name="Yang S."/>
            <person name="Zhang Y."/>
            <person name="Lindpaintner K."/>
            <person name="Andrews T.D."/>
            <person name="Caccamo M."/>
            <person name="Clamp M."/>
            <person name="Clarke L."/>
            <person name="Curwen V."/>
            <person name="Durbin R.M."/>
            <person name="Eyras E."/>
            <person name="Searle S.M."/>
            <person name="Cooper G.M."/>
            <person name="Batzoglou S."/>
            <person name="Brudno M."/>
            <person name="Sidow A."/>
            <person name="Stone E.A."/>
            <person name="Payseur B.A."/>
            <person name="Bourque G."/>
            <person name="Lopez-Otin C."/>
            <person name="Puente X.S."/>
            <person name="Chakrabarti K."/>
            <person name="Chatterji S."/>
            <person name="Dewey C."/>
            <person name="Pachter L."/>
            <person name="Bray N."/>
            <person name="Yap V.B."/>
            <person name="Caspi A."/>
            <person name="Tesler G."/>
            <person name="Pevzner P.A."/>
            <person name="Haussler D."/>
            <person name="Roskin K.M."/>
            <person name="Baertsch R."/>
            <person name="Clawson H."/>
            <person name="Furey T.S."/>
            <person name="Hinrichs A.S."/>
            <person name="Karolchik D."/>
            <person name="Kent W.J."/>
            <person name="Rosenbloom K.R."/>
            <person name="Trumbower H."/>
            <person name="Weirauch M."/>
            <person name="Cooper D.N."/>
            <person name="Stenson P.D."/>
            <person name="Ma B."/>
            <person name="Brent M."/>
            <person name="Arumugam M."/>
            <person name="Shteynberg D."/>
            <person name="Copley R.R."/>
            <person name="Taylor M.S."/>
            <person name="Riethman H."/>
            <person name="Mudunuri U."/>
            <person name="Peterson J."/>
            <person name="Guyer M."/>
            <person name="Felsenfeld A."/>
            <person name="Old S."/>
            <person name="Mockrin S."/>
            <person name="Collins F.S."/>
        </authorList>
    </citation>
    <scope>NUCLEOTIDE SEQUENCE [LARGE SCALE GENOMIC DNA]</scope>
    <source>
        <strain>Brown Norway</strain>
    </source>
</reference>
<reference key="2">
    <citation type="submission" date="2005-07" db="EMBL/GenBank/DDBJ databases">
        <authorList>
            <person name="Mural R.J."/>
            <person name="Adams M.D."/>
            <person name="Myers E.W."/>
            <person name="Smith H.O."/>
            <person name="Venter J.C."/>
        </authorList>
    </citation>
    <scope>NUCLEOTIDE SEQUENCE [LARGE SCALE GENOMIC DNA]</scope>
    <source>
        <strain>Brown Norway</strain>
    </source>
</reference>
<reference key="3">
    <citation type="journal article" date="2015" name="Nucleic Acids Res.">
        <title>The transcription factors SOX9 and SOX5/SOX6 cooperate genome-wide through super-enhancers to drive chondrogenesis.</title>
        <authorList>
            <person name="Liu C.F."/>
            <person name="Lefebvre V."/>
        </authorList>
    </citation>
    <scope>FUNCTION</scope>
    <scope>DNA-BINDING</scope>
</reference>
<protein>
    <recommendedName>
        <fullName evidence="6">Transcription factor SOX-9</fullName>
    </recommendedName>
</protein>
<sequence>MNLLDPFMKMTDEQEKGLSGAPSPTMSEDSAGSPCPSGSGSDTENTRPQENTFPKGEPDLKKESEEDKFPVCIREAVSQVLKGYDWTLVPMPVRVNGSSKNKPHVKRPMNAFMVWAQAARRKLADQYPHLHNAELSKTLGKLWRLLNESEKRPFVEEAERLRVQHKKDHPDYKYQPRRRKSVKNGQAEAEEATEQTHISPNAIFKALQADSPHSSSGMSEVHSPGEHSGQSQGPPTPPTTPKTDVQAGKVDLKREGRPLAEGGRQPPIDFRDVDIGELSSDVISNIETFDVNEFDQYLPPNGHPGVPATHGQVSYTGSYGISSTAPTPATAGHVWMSKQQAPPPPPQQPPQAPQAPQAPPQQQAPPQPQQAPQQQQAHTLTTLSSEPGQSQRTHIKTEQLSPSHYSEQQQHSPQQISYSPFNLPHYNPSYPTITRSQYDYTDHQNSGSYYSHAAGQGSGLYSTFTYMNPAQRPMYTPIADTSGVPSIPQTHSPQHWEQPVYTQLTRP</sequence>
<dbReference type="EMBL" id="AABR07030718">
    <property type="status" value="NOT_ANNOTATED_CDS"/>
    <property type="molecule type" value="Genomic_DNA"/>
</dbReference>
<dbReference type="EMBL" id="CH473948">
    <property type="protein sequence ID" value="EDM06505.1"/>
    <property type="molecule type" value="Genomic_DNA"/>
</dbReference>
<dbReference type="RefSeq" id="NP_536328.1">
    <property type="nucleotide sequence ID" value="NM_080403.3"/>
</dbReference>
<dbReference type="SMR" id="F1LYL9"/>
<dbReference type="FunCoup" id="F1LYL9">
    <property type="interactions" value="410"/>
</dbReference>
<dbReference type="STRING" id="10116.ENSRNOP00000003511"/>
<dbReference type="GlyGen" id="F1LYL9">
    <property type="glycosylation" value="2 sites"/>
</dbReference>
<dbReference type="iPTMnet" id="F1LYL9"/>
<dbReference type="PhosphoSitePlus" id="F1LYL9"/>
<dbReference type="PaxDb" id="10116-ENSRNOP00000003511"/>
<dbReference type="Ensembl" id="ENSRNOT00000003511.7">
    <property type="protein sequence ID" value="ENSRNOP00000003511.5"/>
    <property type="gene ID" value="ENSRNOG00000002607.7"/>
</dbReference>
<dbReference type="GeneID" id="140586"/>
<dbReference type="KEGG" id="rno:140586"/>
<dbReference type="AGR" id="RGD:620474"/>
<dbReference type="CTD" id="6662"/>
<dbReference type="RGD" id="620474">
    <property type="gene designation" value="Sox9"/>
</dbReference>
<dbReference type="eggNOG" id="KOG0527">
    <property type="taxonomic scope" value="Eukaryota"/>
</dbReference>
<dbReference type="GeneTree" id="ENSGT00940000158269"/>
<dbReference type="HOGENOM" id="CLU_031800_0_0_1"/>
<dbReference type="InParanoid" id="F1LYL9"/>
<dbReference type="OMA" id="QSSNSYY"/>
<dbReference type="OrthoDB" id="6247875at2759"/>
<dbReference type="Reactome" id="R-RNO-3769402">
    <property type="pathway name" value="Deactivation of the beta-catenin transactivating complex"/>
</dbReference>
<dbReference type="PRO" id="PR:F1LYL9"/>
<dbReference type="Proteomes" id="UP000002494">
    <property type="component" value="Chromosome 10"/>
</dbReference>
<dbReference type="Proteomes" id="UP000234681">
    <property type="component" value="Chromosome 10"/>
</dbReference>
<dbReference type="Bgee" id="ENSRNOG00000002607">
    <property type="expression patterns" value="Expressed in colon and 16 other cell types or tissues"/>
</dbReference>
<dbReference type="GO" id="GO:0005654">
    <property type="term" value="C:nucleoplasm"/>
    <property type="evidence" value="ECO:0007669"/>
    <property type="project" value="Ensembl"/>
</dbReference>
<dbReference type="GO" id="GO:0005634">
    <property type="term" value="C:nucleus"/>
    <property type="evidence" value="ECO:0000250"/>
    <property type="project" value="UniProtKB"/>
</dbReference>
<dbReference type="GO" id="GO:0032991">
    <property type="term" value="C:protein-containing complex"/>
    <property type="evidence" value="ECO:0000250"/>
    <property type="project" value="UniProtKB"/>
</dbReference>
<dbReference type="GO" id="GO:0005667">
    <property type="term" value="C:transcription regulator complex"/>
    <property type="evidence" value="ECO:0000314"/>
    <property type="project" value="UniProtKB"/>
</dbReference>
<dbReference type="GO" id="GO:0008013">
    <property type="term" value="F:beta-catenin binding"/>
    <property type="evidence" value="ECO:0000266"/>
    <property type="project" value="RGD"/>
</dbReference>
<dbReference type="GO" id="GO:0043425">
    <property type="term" value="F:bHLH transcription factor binding"/>
    <property type="evidence" value="ECO:0000353"/>
    <property type="project" value="UniProtKB"/>
</dbReference>
<dbReference type="GO" id="GO:0003682">
    <property type="term" value="F:chromatin binding"/>
    <property type="evidence" value="ECO:0000250"/>
    <property type="project" value="UniProtKB"/>
</dbReference>
<dbReference type="GO" id="GO:0000987">
    <property type="term" value="F:cis-regulatory region sequence-specific DNA binding"/>
    <property type="evidence" value="ECO:0000314"/>
    <property type="project" value="UniProtKB"/>
</dbReference>
<dbReference type="GO" id="GO:0003677">
    <property type="term" value="F:DNA binding"/>
    <property type="evidence" value="ECO:0000266"/>
    <property type="project" value="RGD"/>
</dbReference>
<dbReference type="GO" id="GO:0001228">
    <property type="term" value="F:DNA-binding transcription activator activity, RNA polymerase II-specific"/>
    <property type="evidence" value="ECO:0000314"/>
    <property type="project" value="UniProtKB"/>
</dbReference>
<dbReference type="GO" id="GO:0003700">
    <property type="term" value="F:DNA-binding transcription factor activity"/>
    <property type="evidence" value="ECO:0000315"/>
    <property type="project" value="RGD"/>
</dbReference>
<dbReference type="GO" id="GO:0000981">
    <property type="term" value="F:DNA-binding transcription factor activity, RNA polymerase II-specific"/>
    <property type="evidence" value="ECO:0000250"/>
    <property type="project" value="UniProtKB"/>
</dbReference>
<dbReference type="GO" id="GO:0097157">
    <property type="term" value="F:pre-mRNA intronic binding"/>
    <property type="evidence" value="ECO:0000266"/>
    <property type="project" value="RGD"/>
</dbReference>
<dbReference type="GO" id="GO:0034236">
    <property type="term" value="F:protein kinase A catalytic subunit binding"/>
    <property type="evidence" value="ECO:0000266"/>
    <property type="project" value="RGD"/>
</dbReference>
<dbReference type="GO" id="GO:0000978">
    <property type="term" value="F:RNA polymerase II cis-regulatory region sequence-specific DNA binding"/>
    <property type="evidence" value="ECO:0000250"/>
    <property type="project" value="UniProtKB"/>
</dbReference>
<dbReference type="GO" id="GO:0043565">
    <property type="term" value="F:sequence-specific DNA binding"/>
    <property type="evidence" value="ECO:0000266"/>
    <property type="project" value="RGD"/>
</dbReference>
<dbReference type="GO" id="GO:1990837">
    <property type="term" value="F:sequence-specific double-stranded DNA binding"/>
    <property type="evidence" value="ECO:0000266"/>
    <property type="project" value="RGD"/>
</dbReference>
<dbReference type="GO" id="GO:0000976">
    <property type="term" value="F:transcription cis-regulatory region binding"/>
    <property type="evidence" value="ECO:0000266"/>
    <property type="project" value="RGD"/>
</dbReference>
<dbReference type="GO" id="GO:0097065">
    <property type="term" value="P:anterior head development"/>
    <property type="evidence" value="ECO:0000266"/>
    <property type="project" value="RGD"/>
</dbReference>
<dbReference type="GO" id="GO:0003180">
    <property type="term" value="P:aortic valve morphogenesis"/>
    <property type="evidence" value="ECO:0000266"/>
    <property type="project" value="RGD"/>
</dbReference>
<dbReference type="GO" id="GO:0006915">
    <property type="term" value="P:apoptotic process"/>
    <property type="evidence" value="ECO:0000266"/>
    <property type="project" value="RGD"/>
</dbReference>
<dbReference type="GO" id="GO:0060018">
    <property type="term" value="P:astrocyte fate commitment"/>
    <property type="evidence" value="ECO:0000266"/>
    <property type="project" value="RGD"/>
</dbReference>
<dbReference type="GO" id="GO:0030282">
    <property type="term" value="P:bone mineralization"/>
    <property type="evidence" value="ECO:0000266"/>
    <property type="project" value="RGD"/>
</dbReference>
<dbReference type="GO" id="GO:0001658">
    <property type="term" value="P:branching involved in ureteric bud morphogenesis"/>
    <property type="evidence" value="ECO:0000266"/>
    <property type="project" value="RGD"/>
</dbReference>
<dbReference type="GO" id="GO:0060532">
    <property type="term" value="P:bronchus cartilage development"/>
    <property type="evidence" value="ECO:0000266"/>
    <property type="project" value="RGD"/>
</dbReference>
<dbReference type="GO" id="GO:0060070">
    <property type="term" value="P:canonical Wnt signaling pathway"/>
    <property type="evidence" value="ECO:0000266"/>
    <property type="project" value="RGD"/>
</dbReference>
<dbReference type="GO" id="GO:0001502">
    <property type="term" value="P:cartilage condensation"/>
    <property type="evidence" value="ECO:0000250"/>
    <property type="project" value="UniProtKB"/>
</dbReference>
<dbReference type="GO" id="GO:0051216">
    <property type="term" value="P:cartilage development"/>
    <property type="evidence" value="ECO:0000270"/>
    <property type="project" value="RGD"/>
</dbReference>
<dbReference type="GO" id="GO:0045165">
    <property type="term" value="P:cell fate commitment"/>
    <property type="evidence" value="ECO:0000266"/>
    <property type="project" value="RGD"/>
</dbReference>
<dbReference type="GO" id="GO:0001708">
    <property type="term" value="P:cell fate specification"/>
    <property type="evidence" value="ECO:0000250"/>
    <property type="project" value="UniProtKB"/>
</dbReference>
<dbReference type="GO" id="GO:0008283">
    <property type="term" value="P:cell population proliferation"/>
    <property type="evidence" value="ECO:0000266"/>
    <property type="project" value="RGD"/>
</dbReference>
<dbReference type="GO" id="GO:0061323">
    <property type="term" value="P:cell proliferation involved in heart morphogenesis"/>
    <property type="evidence" value="ECO:0000266"/>
    <property type="project" value="RGD"/>
</dbReference>
<dbReference type="GO" id="GO:0098609">
    <property type="term" value="P:cell-cell adhesion"/>
    <property type="evidence" value="ECO:0000266"/>
    <property type="project" value="RGD"/>
</dbReference>
<dbReference type="GO" id="GO:0071364">
    <property type="term" value="P:cellular response to epidermal growth factor stimulus"/>
    <property type="evidence" value="ECO:0000250"/>
    <property type="project" value="UniProtKB"/>
</dbReference>
<dbReference type="GO" id="GO:0071504">
    <property type="term" value="P:cellular response to heparin"/>
    <property type="evidence" value="ECO:0000250"/>
    <property type="project" value="UniProtKB"/>
</dbReference>
<dbReference type="GO" id="GO:0071347">
    <property type="term" value="P:cellular response to interleukin-1"/>
    <property type="evidence" value="ECO:0000266"/>
    <property type="project" value="RGD"/>
</dbReference>
<dbReference type="GO" id="GO:0071260">
    <property type="term" value="P:cellular response to mechanical stimulus"/>
    <property type="evidence" value="ECO:0000250"/>
    <property type="project" value="UniProtKB"/>
</dbReference>
<dbReference type="GO" id="GO:0071300">
    <property type="term" value="P:cellular response to retinoic acid"/>
    <property type="evidence" value="ECO:0000266"/>
    <property type="project" value="RGD"/>
</dbReference>
<dbReference type="GO" id="GO:0071560">
    <property type="term" value="P:cellular response to transforming growth factor beta stimulus"/>
    <property type="evidence" value="ECO:0000250"/>
    <property type="project" value="UniProtKB"/>
</dbReference>
<dbReference type="GO" id="GO:0007417">
    <property type="term" value="P:central nervous system development"/>
    <property type="evidence" value="ECO:0000266"/>
    <property type="project" value="RGD"/>
</dbReference>
<dbReference type="GO" id="GO:0002063">
    <property type="term" value="P:chondrocyte development"/>
    <property type="evidence" value="ECO:0000266"/>
    <property type="project" value="RGD"/>
</dbReference>
<dbReference type="GO" id="GO:0002062">
    <property type="term" value="P:chondrocyte differentiation"/>
    <property type="evidence" value="ECO:0000250"/>
    <property type="project" value="UniProtKB"/>
</dbReference>
<dbReference type="GO" id="GO:0003413">
    <property type="term" value="P:chondrocyte differentiation involved in endochondral bone morphogenesis"/>
    <property type="evidence" value="ECO:0000250"/>
    <property type="project" value="UniProtKB"/>
</dbReference>
<dbReference type="GO" id="GO:0003415">
    <property type="term" value="P:chondrocyte hypertrophy"/>
    <property type="evidence" value="ECO:0000250"/>
    <property type="project" value="UniProtKB"/>
</dbReference>
<dbReference type="GO" id="GO:0006338">
    <property type="term" value="P:chromatin remodeling"/>
    <property type="evidence" value="ECO:0000250"/>
    <property type="project" value="UniProtKB"/>
</dbReference>
<dbReference type="GO" id="GO:0090103">
    <property type="term" value="P:cochlea morphogenesis"/>
    <property type="evidence" value="ECO:0000250"/>
    <property type="project" value="UniProtKB"/>
</dbReference>
<dbReference type="GO" id="GO:0007010">
    <property type="term" value="P:cytoskeleton organization"/>
    <property type="evidence" value="ECO:0000266"/>
    <property type="project" value="RGD"/>
</dbReference>
<dbReference type="GO" id="GO:0003203">
    <property type="term" value="P:endocardial cushion morphogenesis"/>
    <property type="evidence" value="ECO:0000250"/>
    <property type="project" value="UniProtKB"/>
</dbReference>
<dbReference type="GO" id="GO:0060350">
    <property type="term" value="P:endochondral bone morphogenesis"/>
    <property type="evidence" value="ECO:0000266"/>
    <property type="project" value="RGD"/>
</dbReference>
<dbReference type="GO" id="GO:0031018">
    <property type="term" value="P:endocrine pancreas development"/>
    <property type="evidence" value="ECO:0000266"/>
    <property type="project" value="RGD"/>
</dbReference>
<dbReference type="GO" id="GO:0007173">
    <property type="term" value="P:epidermal growth factor receptor signaling pathway"/>
    <property type="evidence" value="ECO:0000250"/>
    <property type="project" value="UniProtKB"/>
</dbReference>
<dbReference type="GO" id="GO:0050673">
    <property type="term" value="P:epithelial cell proliferation"/>
    <property type="evidence" value="ECO:0000266"/>
    <property type="project" value="RGD"/>
</dbReference>
<dbReference type="GO" id="GO:0060517">
    <property type="term" value="P:epithelial cell proliferation involved in prostatic bud elongation"/>
    <property type="evidence" value="ECO:0000250"/>
    <property type="project" value="UniProtKB"/>
</dbReference>
<dbReference type="GO" id="GO:0001837">
    <property type="term" value="P:epithelial to mesenchymal transition"/>
    <property type="evidence" value="ECO:0000250"/>
    <property type="project" value="UniProtKB"/>
</dbReference>
<dbReference type="GO" id="GO:0060441">
    <property type="term" value="P:epithelial tube branching involved in lung morphogenesis"/>
    <property type="evidence" value="ECO:0000266"/>
    <property type="project" value="RGD"/>
</dbReference>
<dbReference type="GO" id="GO:0070371">
    <property type="term" value="P:ERK1 and ERK2 cascade"/>
    <property type="evidence" value="ECO:0000250"/>
    <property type="project" value="UniProtKB"/>
</dbReference>
<dbReference type="GO" id="GO:0085029">
    <property type="term" value="P:extracellular matrix assembly"/>
    <property type="evidence" value="ECO:0000266"/>
    <property type="project" value="RGD"/>
</dbReference>
<dbReference type="GO" id="GO:0030198">
    <property type="term" value="P:extracellular matrix organization"/>
    <property type="evidence" value="ECO:0000266"/>
    <property type="project" value="RGD"/>
</dbReference>
<dbReference type="GO" id="GO:0010467">
    <property type="term" value="P:gene expression"/>
    <property type="evidence" value="ECO:0000266"/>
    <property type="project" value="RGD"/>
</dbReference>
<dbReference type="GO" id="GO:0002067">
    <property type="term" value="P:glandular epithelial cell differentiation"/>
    <property type="evidence" value="ECO:0000266"/>
    <property type="project" value="RGD"/>
</dbReference>
<dbReference type="GO" id="GO:0021780">
    <property type="term" value="P:glial cell fate specification"/>
    <property type="evidence" value="ECO:0000266"/>
    <property type="project" value="RGD"/>
</dbReference>
<dbReference type="GO" id="GO:0003430">
    <property type="term" value="P:growth plate cartilage chondrocyte growth"/>
    <property type="evidence" value="ECO:0000250"/>
    <property type="project" value="UniProtKB"/>
</dbReference>
<dbReference type="GO" id="GO:0001942">
    <property type="term" value="P:hair follicle development"/>
    <property type="evidence" value="ECO:0000250"/>
    <property type="project" value="UniProtKB"/>
</dbReference>
<dbReference type="GO" id="GO:0070384">
    <property type="term" value="P:Harderian gland development"/>
    <property type="evidence" value="ECO:0000266"/>
    <property type="project" value="RGD"/>
</dbReference>
<dbReference type="GO" id="GO:0007507">
    <property type="term" value="P:heart development"/>
    <property type="evidence" value="ECO:0000266"/>
    <property type="project" value="RGD"/>
</dbReference>
<dbReference type="GO" id="GO:0003170">
    <property type="term" value="P:heart valve development"/>
    <property type="evidence" value="ECO:0000250"/>
    <property type="project" value="UniProtKB"/>
</dbReference>
<dbReference type="GO" id="GO:0003188">
    <property type="term" value="P:heart valve formation"/>
    <property type="evidence" value="ECO:0000266"/>
    <property type="project" value="RGD"/>
</dbReference>
<dbReference type="GO" id="GO:0003179">
    <property type="term" value="P:heart valve morphogenesis"/>
    <property type="evidence" value="ECO:0000250"/>
    <property type="project" value="UniProtKB"/>
</dbReference>
<dbReference type="GO" id="GO:0048873">
    <property type="term" value="P:homeostasis of number of cells within a tissue"/>
    <property type="evidence" value="ECO:0000266"/>
    <property type="project" value="RGD"/>
</dbReference>
<dbReference type="GO" id="GO:0060575">
    <property type="term" value="P:intestinal epithelial cell differentiation"/>
    <property type="evidence" value="ECO:0000266"/>
    <property type="project" value="RGD"/>
</dbReference>
<dbReference type="GO" id="GO:0060729">
    <property type="term" value="P:intestinal epithelial structure maintenance"/>
    <property type="evidence" value="ECO:0000250"/>
    <property type="project" value="UniProtKB"/>
</dbReference>
<dbReference type="GO" id="GO:0035622">
    <property type="term" value="P:intrahepatic bile duct development"/>
    <property type="evidence" value="ECO:0000266"/>
    <property type="project" value="RGD"/>
</dbReference>
<dbReference type="GO" id="GO:0032808">
    <property type="term" value="P:lacrimal gland development"/>
    <property type="evidence" value="ECO:0000266"/>
    <property type="project" value="RGD"/>
</dbReference>
<dbReference type="GO" id="GO:0060174">
    <property type="term" value="P:limb bud formation"/>
    <property type="evidence" value="ECO:0000266"/>
    <property type="project" value="RGD"/>
</dbReference>
<dbReference type="GO" id="GO:0060487">
    <property type="term" value="P:lung epithelial cell differentiation"/>
    <property type="evidence" value="ECO:0000266"/>
    <property type="project" value="RGD"/>
</dbReference>
<dbReference type="GO" id="GO:0061145">
    <property type="term" value="P:lung smooth muscle development"/>
    <property type="evidence" value="ECO:0000266"/>
    <property type="project" value="RGD"/>
</dbReference>
<dbReference type="GO" id="GO:0019100">
    <property type="term" value="P:male germ-line sex determination"/>
    <property type="evidence" value="ECO:0000250"/>
    <property type="project" value="UniProtKB"/>
</dbReference>
<dbReference type="GO" id="GO:0008584">
    <property type="term" value="P:male gonad development"/>
    <property type="evidence" value="ECO:0000250"/>
    <property type="project" value="UniProtKB"/>
</dbReference>
<dbReference type="GO" id="GO:0030238">
    <property type="term" value="P:male sex determination"/>
    <property type="evidence" value="ECO:0000266"/>
    <property type="project" value="RGD"/>
</dbReference>
<dbReference type="GO" id="GO:0030879">
    <property type="term" value="P:mammary gland development"/>
    <property type="evidence" value="ECO:0000266"/>
    <property type="project" value="RGD"/>
</dbReference>
<dbReference type="GO" id="GO:0097152">
    <property type="term" value="P:mesenchymal cell apoptotic process"/>
    <property type="evidence" value="ECO:0000266"/>
    <property type="project" value="RGD"/>
</dbReference>
<dbReference type="GO" id="GO:0010463">
    <property type="term" value="P:mesenchymal cell proliferation"/>
    <property type="evidence" value="ECO:0000266"/>
    <property type="project" value="RGD"/>
</dbReference>
<dbReference type="GO" id="GO:0072289">
    <property type="term" value="P:metanephric nephron tubule formation"/>
    <property type="evidence" value="ECO:0000250"/>
    <property type="project" value="UniProtKB"/>
</dbReference>
<dbReference type="GO" id="GO:0072170">
    <property type="term" value="P:metanephric tubule development"/>
    <property type="evidence" value="ECO:0000266"/>
    <property type="project" value="RGD"/>
</dbReference>
<dbReference type="GO" id="GO:0061138">
    <property type="term" value="P:morphogenesis of a branching epithelium"/>
    <property type="evidence" value="ECO:0000250"/>
    <property type="project" value="UniProtKB"/>
</dbReference>
<dbReference type="GO" id="GO:0002009">
    <property type="term" value="P:morphogenesis of an epithelium"/>
    <property type="evidence" value="ECO:0000318"/>
    <property type="project" value="GO_Central"/>
</dbReference>
<dbReference type="GO" id="GO:0043066">
    <property type="term" value="P:negative regulation of apoptotic process"/>
    <property type="evidence" value="ECO:0000250"/>
    <property type="project" value="UniProtKB"/>
</dbReference>
<dbReference type="GO" id="GO:1904864">
    <property type="term" value="P:negative regulation of beta-catenin-TCF complex assembly"/>
    <property type="evidence" value="ECO:0000266"/>
    <property type="project" value="RGD"/>
</dbReference>
<dbReference type="GO" id="GO:0070168">
    <property type="term" value="P:negative regulation of biomineral tissue development"/>
    <property type="evidence" value="ECO:0000250"/>
    <property type="project" value="UniProtKB"/>
</dbReference>
<dbReference type="GO" id="GO:0030502">
    <property type="term" value="P:negative regulation of bone mineralization"/>
    <property type="evidence" value="ECO:0000266"/>
    <property type="project" value="RGD"/>
</dbReference>
<dbReference type="GO" id="GO:0090090">
    <property type="term" value="P:negative regulation of canonical Wnt signaling pathway"/>
    <property type="evidence" value="ECO:0000250"/>
    <property type="project" value="UniProtKB"/>
</dbReference>
<dbReference type="GO" id="GO:0032331">
    <property type="term" value="P:negative regulation of chondrocyte differentiation"/>
    <property type="evidence" value="ECO:0000250"/>
    <property type="project" value="UniProtKB"/>
</dbReference>
<dbReference type="GO" id="GO:0045892">
    <property type="term" value="P:negative regulation of DNA-templated transcription"/>
    <property type="evidence" value="ECO:0000250"/>
    <property type="project" value="UniProtKB"/>
</dbReference>
<dbReference type="GO" id="GO:0030857">
    <property type="term" value="P:negative regulation of epithelial cell differentiation"/>
    <property type="evidence" value="ECO:0000266"/>
    <property type="project" value="RGD"/>
</dbReference>
<dbReference type="GO" id="GO:0050680">
    <property type="term" value="P:negative regulation of epithelial cell proliferation"/>
    <property type="evidence" value="ECO:0000250"/>
    <property type="project" value="UniProtKB"/>
</dbReference>
<dbReference type="GO" id="GO:0046322">
    <property type="term" value="P:negative regulation of fatty acid oxidation"/>
    <property type="evidence" value="ECO:0000250"/>
    <property type="project" value="UniProtKB"/>
</dbReference>
<dbReference type="GO" id="GO:0010629">
    <property type="term" value="P:negative regulation of gene expression"/>
    <property type="evidence" value="ECO:0000266"/>
    <property type="project" value="RGD"/>
</dbReference>
<dbReference type="GO" id="GO:0002683">
    <property type="term" value="P:negative regulation of immune system process"/>
    <property type="evidence" value="ECO:0000250"/>
    <property type="project" value="UniProtKB"/>
</dbReference>
<dbReference type="GO" id="GO:2001054">
    <property type="term" value="P:negative regulation of mesenchymal cell apoptotic process"/>
    <property type="evidence" value="ECO:0000266"/>
    <property type="project" value="RGD"/>
</dbReference>
<dbReference type="GO" id="GO:1902894">
    <property type="term" value="P:negative regulation of miRNA transcription"/>
    <property type="evidence" value="ECO:0000266"/>
    <property type="project" value="RGD"/>
</dbReference>
<dbReference type="GO" id="GO:0045662">
    <property type="term" value="P:negative regulation of myoblast differentiation"/>
    <property type="evidence" value="ECO:0000250"/>
    <property type="project" value="UniProtKB"/>
</dbReference>
<dbReference type="GO" id="GO:0030279">
    <property type="term" value="P:negative regulation of ossification"/>
    <property type="evidence" value="ECO:0000250"/>
    <property type="project" value="UniProtKB"/>
</dbReference>
<dbReference type="GO" id="GO:0045668">
    <property type="term" value="P:negative regulation of osteoblast differentiation"/>
    <property type="evidence" value="ECO:0000250"/>
    <property type="project" value="UniProtKB"/>
</dbReference>
<dbReference type="GO" id="GO:0046533">
    <property type="term" value="P:negative regulation of photoreceptor cell differentiation"/>
    <property type="evidence" value="ECO:0000250"/>
    <property type="project" value="UniProtKB"/>
</dbReference>
<dbReference type="GO" id="GO:0000122">
    <property type="term" value="P:negative regulation of transcription by RNA polymerase II"/>
    <property type="evidence" value="ECO:0000266"/>
    <property type="project" value="RGD"/>
</dbReference>
<dbReference type="GO" id="GO:0014032">
    <property type="term" value="P:neural crest cell development"/>
    <property type="evidence" value="ECO:0000266"/>
    <property type="project" value="RGD"/>
</dbReference>
<dbReference type="GO" id="GO:0048665">
    <property type="term" value="P:neuron fate specification"/>
    <property type="evidence" value="ECO:0000266"/>
    <property type="project" value="RGD"/>
</dbReference>
<dbReference type="GO" id="GO:0007219">
    <property type="term" value="P:Notch signaling pathway"/>
    <property type="evidence" value="ECO:0000266"/>
    <property type="project" value="RGD"/>
</dbReference>
<dbReference type="GO" id="GO:0030903">
    <property type="term" value="P:notochord development"/>
    <property type="evidence" value="ECO:0000266"/>
    <property type="project" value="RGD"/>
</dbReference>
<dbReference type="GO" id="GO:0006334">
    <property type="term" value="P:nucleosome assembly"/>
    <property type="evidence" value="ECO:0000250"/>
    <property type="project" value="UniProtKB"/>
</dbReference>
<dbReference type="GO" id="GO:0048709">
    <property type="term" value="P:oligodendrocyte differentiation"/>
    <property type="evidence" value="ECO:0000266"/>
    <property type="project" value="RGD"/>
</dbReference>
<dbReference type="GO" id="GO:0001503">
    <property type="term" value="P:ossification"/>
    <property type="evidence" value="ECO:0000266"/>
    <property type="project" value="RGD"/>
</dbReference>
<dbReference type="GO" id="GO:0071599">
    <property type="term" value="P:otic vesicle development"/>
    <property type="evidence" value="ECO:0000266"/>
    <property type="project" value="RGD"/>
</dbReference>
<dbReference type="GO" id="GO:0030916">
    <property type="term" value="P:otic vesicle formation"/>
    <property type="evidence" value="ECO:0000250"/>
    <property type="project" value="UniProtKB"/>
</dbReference>
<dbReference type="GO" id="GO:0090190">
    <property type="term" value="P:positive regulation of branching involved in ureteric bud morphogenesis"/>
    <property type="evidence" value="ECO:0000250"/>
    <property type="project" value="UniProtKB"/>
</dbReference>
<dbReference type="GO" id="GO:0061036">
    <property type="term" value="P:positive regulation of cartilage development"/>
    <property type="evidence" value="ECO:0000250"/>
    <property type="project" value="UniProtKB"/>
</dbReference>
<dbReference type="GO" id="GO:0008284">
    <property type="term" value="P:positive regulation of cell population proliferation"/>
    <property type="evidence" value="ECO:0000250"/>
    <property type="project" value="UniProtKB"/>
</dbReference>
<dbReference type="GO" id="GO:2000138">
    <property type="term" value="P:positive regulation of cell proliferation involved in heart morphogenesis"/>
    <property type="evidence" value="ECO:0000266"/>
    <property type="project" value="RGD"/>
</dbReference>
<dbReference type="GO" id="GO:0032332">
    <property type="term" value="P:positive regulation of chondrocyte differentiation"/>
    <property type="evidence" value="ECO:0000250"/>
    <property type="project" value="UniProtKB"/>
</dbReference>
<dbReference type="GO" id="GO:1902732">
    <property type="term" value="P:positive regulation of chondrocyte proliferation"/>
    <property type="evidence" value="ECO:0000266"/>
    <property type="project" value="RGD"/>
</dbReference>
<dbReference type="GO" id="GO:0045893">
    <property type="term" value="P:positive regulation of DNA-templated transcription"/>
    <property type="evidence" value="ECO:0000266"/>
    <property type="project" value="RGD"/>
</dbReference>
<dbReference type="GO" id="GO:0030858">
    <property type="term" value="P:positive regulation of epithelial cell differentiation"/>
    <property type="evidence" value="ECO:0000250"/>
    <property type="project" value="UniProtKB"/>
</dbReference>
<dbReference type="GO" id="GO:0010634">
    <property type="term" value="P:positive regulation of epithelial cell migration"/>
    <property type="evidence" value="ECO:0000250"/>
    <property type="project" value="UniProtKB"/>
</dbReference>
<dbReference type="GO" id="GO:0050679">
    <property type="term" value="P:positive regulation of epithelial cell proliferation"/>
    <property type="evidence" value="ECO:0000250"/>
    <property type="project" value="UniProtKB"/>
</dbReference>
<dbReference type="GO" id="GO:1901203">
    <property type="term" value="P:positive regulation of extracellular matrix assembly"/>
    <property type="evidence" value="ECO:0000266"/>
    <property type="project" value="RGD"/>
</dbReference>
<dbReference type="GO" id="GO:0010628">
    <property type="term" value="P:positive regulation of gene expression"/>
    <property type="evidence" value="ECO:0000314"/>
    <property type="project" value="UniProtKB"/>
</dbReference>
<dbReference type="GO" id="GO:0090184">
    <property type="term" value="P:positive regulation of kidney development"/>
    <property type="evidence" value="ECO:0000250"/>
    <property type="project" value="UniProtKB"/>
</dbReference>
<dbReference type="GO" id="GO:2000020">
    <property type="term" value="P:positive regulation of male gonad development"/>
    <property type="evidence" value="ECO:0000250"/>
    <property type="project" value="UniProtKB"/>
</dbReference>
<dbReference type="GO" id="GO:0002053">
    <property type="term" value="P:positive regulation of mesenchymal cell proliferation"/>
    <property type="evidence" value="ECO:0000250"/>
    <property type="project" value="UniProtKB"/>
</dbReference>
<dbReference type="GO" id="GO:2000741">
    <property type="term" value="P:positive regulation of mesenchymal stem cell differentiation"/>
    <property type="evidence" value="ECO:0000250"/>
    <property type="project" value="UniProtKB"/>
</dbReference>
<dbReference type="GO" id="GO:0045732">
    <property type="term" value="P:positive regulation of protein catabolic process"/>
    <property type="evidence" value="ECO:0000266"/>
    <property type="project" value="RGD"/>
</dbReference>
<dbReference type="GO" id="GO:2000648">
    <property type="term" value="P:positive regulation of stem cell proliferation"/>
    <property type="evidence" value="ECO:0000266"/>
    <property type="project" value="RGD"/>
</dbReference>
<dbReference type="GO" id="GO:0045944">
    <property type="term" value="P:positive regulation of transcription by RNA polymerase II"/>
    <property type="evidence" value="ECO:0000314"/>
    <property type="project" value="UniProtKB"/>
</dbReference>
<dbReference type="GO" id="GO:0030850">
    <property type="term" value="P:prostate gland development"/>
    <property type="evidence" value="ECO:0000266"/>
    <property type="project" value="RGD"/>
</dbReference>
<dbReference type="GO" id="GO:0060512">
    <property type="term" value="P:prostate gland morphogenesis"/>
    <property type="evidence" value="ECO:0000266"/>
    <property type="project" value="RGD"/>
</dbReference>
<dbReference type="GO" id="GO:0034504">
    <property type="term" value="P:protein localization to nucleus"/>
    <property type="evidence" value="ECO:0000266"/>
    <property type="project" value="RGD"/>
</dbReference>
<dbReference type="GO" id="GO:0065003">
    <property type="term" value="P:protein-containing complex assembly"/>
    <property type="evidence" value="ECO:0000250"/>
    <property type="project" value="UniProtKB"/>
</dbReference>
<dbReference type="GO" id="GO:0042981">
    <property type="term" value="P:regulation of apoptotic process"/>
    <property type="evidence" value="ECO:0000250"/>
    <property type="project" value="UniProtKB"/>
</dbReference>
<dbReference type="GO" id="GO:0061046">
    <property type="term" value="P:regulation of branching involved in lung morphogenesis"/>
    <property type="evidence" value="ECO:0000266"/>
    <property type="project" value="RGD"/>
</dbReference>
<dbReference type="GO" id="GO:0030155">
    <property type="term" value="P:regulation of cell adhesion"/>
    <property type="evidence" value="ECO:0000266"/>
    <property type="project" value="RGD"/>
</dbReference>
<dbReference type="GO" id="GO:0010564">
    <property type="term" value="P:regulation of cell cycle process"/>
    <property type="evidence" value="ECO:0000250"/>
    <property type="project" value="UniProtKB"/>
</dbReference>
<dbReference type="GO" id="GO:0045595">
    <property type="term" value="P:regulation of cell differentiation"/>
    <property type="evidence" value="ECO:0000266"/>
    <property type="project" value="RGD"/>
</dbReference>
<dbReference type="GO" id="GO:0042127">
    <property type="term" value="P:regulation of cell population proliferation"/>
    <property type="evidence" value="ECO:0000250"/>
    <property type="project" value="UniProtKB"/>
</dbReference>
<dbReference type="GO" id="GO:0060784">
    <property type="term" value="P:regulation of cell proliferation involved in tissue homeostasis"/>
    <property type="evidence" value="ECO:0000250"/>
    <property type="project" value="UniProtKB"/>
</dbReference>
<dbReference type="GO" id="GO:2000794">
    <property type="term" value="P:regulation of epithelial cell proliferation involved in lung morphogenesis"/>
    <property type="evidence" value="ECO:0000266"/>
    <property type="project" value="RGD"/>
</dbReference>
<dbReference type="GO" id="GO:0010468">
    <property type="term" value="P:regulation of gene expression"/>
    <property type="evidence" value="ECO:0000266"/>
    <property type="project" value="RGD"/>
</dbReference>
<dbReference type="GO" id="GO:0006357">
    <property type="term" value="P:regulation of transcription by RNA polymerase II"/>
    <property type="evidence" value="ECO:0000266"/>
    <property type="project" value="RGD"/>
</dbReference>
<dbReference type="GO" id="GO:0072034">
    <property type="term" value="P:renal vesicle induction"/>
    <property type="evidence" value="ECO:0000250"/>
    <property type="project" value="UniProtKB"/>
</dbReference>
<dbReference type="GO" id="GO:0070542">
    <property type="term" value="P:response to fatty acid"/>
    <property type="evidence" value="ECO:0000250"/>
    <property type="project" value="UniProtKB"/>
</dbReference>
<dbReference type="GO" id="GO:0060041">
    <property type="term" value="P:retina development in camera-type eye"/>
    <property type="evidence" value="ECO:0000250"/>
    <property type="project" value="UniProtKB"/>
</dbReference>
<dbReference type="GO" id="GO:0060221">
    <property type="term" value="P:retinal rod cell differentiation"/>
    <property type="evidence" value="ECO:0000250"/>
    <property type="project" value="UniProtKB"/>
</dbReference>
<dbReference type="GO" id="GO:0060009">
    <property type="term" value="P:Sertoli cell development"/>
    <property type="evidence" value="ECO:0000270"/>
    <property type="project" value="UniProtKB"/>
</dbReference>
<dbReference type="GO" id="GO:0060008">
    <property type="term" value="P:Sertoli cell differentiation"/>
    <property type="evidence" value="ECO:0000250"/>
    <property type="project" value="UniProtKB"/>
</dbReference>
<dbReference type="GO" id="GO:0007165">
    <property type="term" value="P:signal transduction"/>
    <property type="evidence" value="ECO:0000250"/>
    <property type="project" value="UniProtKB"/>
</dbReference>
<dbReference type="GO" id="GO:0001501">
    <property type="term" value="P:skeletal system development"/>
    <property type="evidence" value="ECO:0000250"/>
    <property type="project" value="UniProtKB"/>
</dbReference>
<dbReference type="GO" id="GO:0035019">
    <property type="term" value="P:somatic stem cell population maintenance"/>
    <property type="evidence" value="ECO:0000250"/>
    <property type="project" value="UniProtKB"/>
</dbReference>
<dbReference type="GO" id="GO:0007283">
    <property type="term" value="P:spermatogenesis"/>
    <property type="evidence" value="ECO:0000250"/>
    <property type="project" value="UniProtKB"/>
</dbReference>
<dbReference type="GO" id="GO:0072089">
    <property type="term" value="P:stem cell proliferation"/>
    <property type="evidence" value="ECO:0000266"/>
    <property type="project" value="RGD"/>
</dbReference>
<dbReference type="GO" id="GO:0001894">
    <property type="term" value="P:tissue homeostasis"/>
    <property type="evidence" value="ECO:0000250"/>
    <property type="project" value="UniProtKB"/>
</dbReference>
<dbReference type="GO" id="GO:0060534">
    <property type="term" value="P:trachea cartilage development"/>
    <property type="evidence" value="ECO:0000266"/>
    <property type="project" value="RGD"/>
</dbReference>
<dbReference type="GO" id="GO:0006366">
    <property type="term" value="P:transcription by RNA polymerase II"/>
    <property type="evidence" value="ECO:0000266"/>
    <property type="project" value="RGD"/>
</dbReference>
<dbReference type="GO" id="GO:0060509">
    <property type="term" value="P:type I pneumocyte differentiation"/>
    <property type="evidence" value="ECO:0000266"/>
    <property type="project" value="RGD"/>
</dbReference>
<dbReference type="GO" id="GO:0072189">
    <property type="term" value="P:ureter development"/>
    <property type="evidence" value="ECO:0000266"/>
    <property type="project" value="RGD"/>
</dbReference>
<dbReference type="GO" id="GO:0072197">
    <property type="term" value="P:ureter morphogenesis"/>
    <property type="evidence" value="ECO:0000266"/>
    <property type="project" value="RGD"/>
</dbReference>
<dbReference type="GO" id="GO:0072193">
    <property type="term" value="P:ureter smooth muscle cell differentiation"/>
    <property type="evidence" value="ECO:0000266"/>
    <property type="project" value="RGD"/>
</dbReference>
<dbReference type="GO" id="GO:0072190">
    <property type="term" value="P:ureter urothelium development"/>
    <property type="evidence" value="ECO:0000266"/>
    <property type="project" value="RGD"/>
</dbReference>
<dbReference type="CDD" id="cd22031">
    <property type="entry name" value="HMG-box_SoxE"/>
    <property type="match status" value="1"/>
</dbReference>
<dbReference type="FunFam" id="1.10.30.10:FF:000004">
    <property type="entry name" value="Transcription factor SOX-10"/>
    <property type="match status" value="1"/>
</dbReference>
<dbReference type="Gene3D" id="1.10.30.10">
    <property type="entry name" value="High mobility group box domain"/>
    <property type="match status" value="1"/>
</dbReference>
<dbReference type="InterPro" id="IPR009071">
    <property type="entry name" value="HMG_box_dom"/>
</dbReference>
<dbReference type="InterPro" id="IPR036910">
    <property type="entry name" value="HMG_box_dom_sf"/>
</dbReference>
<dbReference type="InterPro" id="IPR022151">
    <property type="entry name" value="Sox_N"/>
</dbReference>
<dbReference type="InterPro" id="IPR050917">
    <property type="entry name" value="SOX_TF"/>
</dbReference>
<dbReference type="PANTHER" id="PTHR45803">
    <property type="entry name" value="SOX100B"/>
    <property type="match status" value="1"/>
</dbReference>
<dbReference type="PANTHER" id="PTHR45803:SF1">
    <property type="entry name" value="TRANSCRIPTION FACTOR SOX-9"/>
    <property type="match status" value="1"/>
</dbReference>
<dbReference type="Pfam" id="PF00505">
    <property type="entry name" value="HMG_box"/>
    <property type="match status" value="1"/>
</dbReference>
<dbReference type="Pfam" id="PF12444">
    <property type="entry name" value="Sox_N"/>
    <property type="match status" value="1"/>
</dbReference>
<dbReference type="SMART" id="SM00398">
    <property type="entry name" value="HMG"/>
    <property type="match status" value="1"/>
</dbReference>
<dbReference type="SUPFAM" id="SSF47095">
    <property type="entry name" value="HMG-box"/>
    <property type="match status" value="1"/>
</dbReference>
<dbReference type="PROSITE" id="PS50118">
    <property type="entry name" value="HMG_BOX_2"/>
    <property type="match status" value="1"/>
</dbReference>
<proteinExistence type="evidence at protein level"/>
<organism>
    <name type="scientific">Rattus norvegicus</name>
    <name type="common">Rat</name>
    <dbReference type="NCBI Taxonomy" id="10116"/>
    <lineage>
        <taxon>Eukaryota</taxon>
        <taxon>Metazoa</taxon>
        <taxon>Chordata</taxon>
        <taxon>Craniata</taxon>
        <taxon>Vertebrata</taxon>
        <taxon>Euteleostomi</taxon>
        <taxon>Mammalia</taxon>
        <taxon>Eutheria</taxon>
        <taxon>Euarchontoglires</taxon>
        <taxon>Glires</taxon>
        <taxon>Rodentia</taxon>
        <taxon>Myomorpha</taxon>
        <taxon>Muroidea</taxon>
        <taxon>Muridae</taxon>
        <taxon>Murinae</taxon>
        <taxon>Rattus</taxon>
    </lineage>
</organism>